<keyword id="KW-0007">Acetylation</keyword>
<keyword id="KW-0963">Cytoplasm</keyword>
<keyword id="KW-0396">Initiation factor</keyword>
<keyword id="KW-0597">Phosphoprotein</keyword>
<keyword id="KW-0648">Protein biosynthesis</keyword>
<keyword id="KW-1185">Reference proteome</keyword>
<name>EIF3L_PANTR</name>
<organism>
    <name type="scientific">Pan troglodytes</name>
    <name type="common">Chimpanzee</name>
    <dbReference type="NCBI Taxonomy" id="9598"/>
    <lineage>
        <taxon>Eukaryota</taxon>
        <taxon>Metazoa</taxon>
        <taxon>Chordata</taxon>
        <taxon>Craniata</taxon>
        <taxon>Vertebrata</taxon>
        <taxon>Euteleostomi</taxon>
        <taxon>Mammalia</taxon>
        <taxon>Eutheria</taxon>
        <taxon>Euarchontoglires</taxon>
        <taxon>Primates</taxon>
        <taxon>Haplorrhini</taxon>
        <taxon>Catarrhini</taxon>
        <taxon>Hominidae</taxon>
        <taxon>Pan</taxon>
    </lineage>
</organism>
<evidence type="ECO:0000250" key="1">
    <source>
        <dbReference type="UniProtKB" id="Q9Y262"/>
    </source>
</evidence>
<evidence type="ECO:0000255" key="2">
    <source>
        <dbReference type="HAMAP-Rule" id="MF_03011"/>
    </source>
</evidence>
<evidence type="ECO:0000255" key="3">
    <source>
        <dbReference type="PROSITE-ProRule" id="PRU01185"/>
    </source>
</evidence>
<dbReference type="EMBL" id="AB222152">
    <property type="protein sequence ID" value="BAF62397.1"/>
    <property type="molecule type" value="mRNA"/>
</dbReference>
<dbReference type="RefSeq" id="NP_001128679.1">
    <property type="nucleotide sequence ID" value="NM_001135207.2"/>
</dbReference>
<dbReference type="SMR" id="A5A6M4"/>
<dbReference type="STRING" id="9598.ENSPTRP00000087895"/>
<dbReference type="PaxDb" id="9598-ENSPTRP00000059279"/>
<dbReference type="GeneID" id="743454"/>
<dbReference type="KEGG" id="ptr:743454"/>
<dbReference type="CTD" id="51386"/>
<dbReference type="eggNOG" id="KOG3677">
    <property type="taxonomic scope" value="Eukaryota"/>
</dbReference>
<dbReference type="InParanoid" id="A5A6M4"/>
<dbReference type="OrthoDB" id="8096at9604"/>
<dbReference type="Proteomes" id="UP000002277">
    <property type="component" value="Unplaced"/>
</dbReference>
<dbReference type="GO" id="GO:0016282">
    <property type="term" value="C:eukaryotic 43S preinitiation complex"/>
    <property type="evidence" value="ECO:0007669"/>
    <property type="project" value="UniProtKB-UniRule"/>
</dbReference>
<dbReference type="GO" id="GO:0033290">
    <property type="term" value="C:eukaryotic 48S preinitiation complex"/>
    <property type="evidence" value="ECO:0007669"/>
    <property type="project" value="UniProtKB-UniRule"/>
</dbReference>
<dbReference type="GO" id="GO:0005852">
    <property type="term" value="C:eukaryotic translation initiation factor 3 complex"/>
    <property type="evidence" value="ECO:0000250"/>
    <property type="project" value="UniProtKB"/>
</dbReference>
<dbReference type="GO" id="GO:0003743">
    <property type="term" value="F:translation initiation factor activity"/>
    <property type="evidence" value="ECO:0007669"/>
    <property type="project" value="UniProtKB-UniRule"/>
</dbReference>
<dbReference type="GO" id="GO:0001732">
    <property type="term" value="P:formation of cytoplasmic translation initiation complex"/>
    <property type="evidence" value="ECO:0007669"/>
    <property type="project" value="UniProtKB-UniRule"/>
</dbReference>
<dbReference type="GO" id="GO:0006413">
    <property type="term" value="P:translational initiation"/>
    <property type="evidence" value="ECO:0000250"/>
    <property type="project" value="UniProtKB"/>
</dbReference>
<dbReference type="HAMAP" id="MF_03011">
    <property type="entry name" value="eIF3l"/>
    <property type="match status" value="1"/>
</dbReference>
<dbReference type="InterPro" id="IPR019382">
    <property type="entry name" value="eIF3l"/>
</dbReference>
<dbReference type="InterPro" id="IPR000717">
    <property type="entry name" value="PCI_dom"/>
</dbReference>
<dbReference type="InterPro" id="IPR011990">
    <property type="entry name" value="TPR-like_helical_dom_sf"/>
</dbReference>
<dbReference type="PANTHER" id="PTHR13242">
    <property type="entry name" value="EUKARYOTIC TRANSLATION INITIATION FACTOR 3"/>
    <property type="match status" value="1"/>
</dbReference>
<dbReference type="PANTHER" id="PTHR13242:SF0">
    <property type="entry name" value="EUKARYOTIC TRANSLATION INITIATION FACTOR 3 SUBUNIT L"/>
    <property type="match status" value="1"/>
</dbReference>
<dbReference type="Pfam" id="PF10255">
    <property type="entry name" value="Paf67"/>
    <property type="match status" value="1"/>
</dbReference>
<dbReference type="SUPFAM" id="SSF48452">
    <property type="entry name" value="TPR-like"/>
    <property type="match status" value="1"/>
</dbReference>
<dbReference type="PROSITE" id="PS50250">
    <property type="entry name" value="PCI"/>
    <property type="match status" value="1"/>
</dbReference>
<comment type="function">
    <text evidence="2">Component of the eukaryotic translation initiation factor 3 (eIF-3) complex, which is required for several steps in the initiation of protein synthesis. The eIF-3 complex associates with the 40S ribosome and facilitates the recruitment of eIF-1, eIF-1A, eIF-2:GTP:methionyl-tRNAi and eIF-5 to form the 43S pre-initiation complex (43S PIC). The eIF-3 complex stimulates mRNA recruitment to the 43S PIC and scanning of the mRNA for AUG recognition. The eIF-3 complex is also required for disassembly and recycling of post-termination ribosomal complexes and subsequently prevents premature joining of the 40S and 60S ribosomal subunits prior to initiation. The eIF-3 complex specifically targets and initiates translation of a subset of mRNAs involved in cell proliferation, including cell cycling, differentiation and apoptosis, and uses different modes of RNA stem-loop binding to exert either translational activation or repression.</text>
</comment>
<comment type="subunit">
    <text evidence="2">Component of the eukaryotic translation initiation factor 3 (eIF-3) complex, which is composed of 13 subunits: EIF3A, EIF3B, EIF3C, EIF3D, EIF3E, EIF3F, EIF3G, EIF3H, EIF3I, EIF3J, EIF3K, EIF3L and EIF3M. The eIF-3 complex appears to include 3 stable modules: module A is composed of EIF3A, EIF3B, EIF3G and EIF3I; module B is composed of EIF3F, EIF3H, and EIF3M; and module C is composed of EIF3C, EIF3D, EIF3E, EIF3K and EIF3L. EIF3C of module C binds EIF3B of module A and EIF3H of module B, thereby linking the three modules. EIF3J is a labile subunit that binds to the eIF-3 complex via EIF3B. The eIF-3 complex interacts with RPS6KB1 under conditions of nutrient depletion. Mitogenic stimulation leads to binding and activation of a complex composed of MTOR and RPTOR, leading to phosphorylation and release of RPS6KB1 and binding of EIF4B to eIF-3. Interacts with RRN3.</text>
</comment>
<comment type="subcellular location">
    <subcellularLocation>
        <location evidence="2">Cytoplasm</location>
    </subcellularLocation>
</comment>
<comment type="similarity">
    <text evidence="2">Belongs to the eIF-3 subunit L family.</text>
</comment>
<gene>
    <name evidence="2" type="primary">EIF3L</name>
    <name evidence="2" type="synonym">EIF3EIP</name>
    <name evidence="2" type="synonym">EIF3S6IP</name>
</gene>
<sequence length="564" mass="66697">MSYPADDYESEAAYDPYAYPSDYDMHTGDPKQDLAYERQYEQQTYQVIPEVIKNFIQYFHKTVSDLIDQKVYELQASRVSSDVIDQKVYEIQDIYENSWTKLTERFFKNTPWPEAEAIAPQVGNDAVFLILYKELYYRHIYAKVSGGPSLEQRFESYYNYCNLFNYILNADGPAPLELPNQWLWDIIDEFIYQFQSFSQYRCKTAKKSEEEIDFLRSNPKIWNVHSVLNVLHSLVDKSNINRQLEVYTSGGDPESVAGEYGRHSLYKMLGYFSLVGLLRLHSLLGDYYQAIKVLENIELNKKSMYSRVPECQVTTYYYVGFAYLTMRRYQDAIRVFANILLYIQRTKSMFQRTTYKYEMINKQNEQMHALLAIALTMYPMRIDESIHLQLREKYGDKMLRMQKGDPQVYEELFSYSCPKFLSPVVPNYDNVHPNYHKEPFLQQLKVFSDEVQQQAQLSTIRSFLKLYTTMPVAKLAGFLDLTEQEFRIQLLVFKHKMKNLVWTSGISALDGEFQSASEVDFYIDKDMIHIADTKVARRYGDFFIRQIHKFEELNRTLKKMGQRP</sequence>
<feature type="initiator methionine" description="Removed" evidence="2">
    <location>
        <position position="1"/>
    </location>
</feature>
<feature type="chain" id="PRO_0000297492" description="Eukaryotic translation initiation factor 3 subunit L">
    <location>
        <begin position="2"/>
        <end position="564"/>
    </location>
</feature>
<feature type="domain" description="PCI" evidence="3">
    <location>
        <begin position="331"/>
        <end position="537"/>
    </location>
</feature>
<feature type="modified residue" description="N-acetylserine" evidence="1 2">
    <location>
        <position position="2"/>
    </location>
</feature>
<feature type="modified residue" description="Phosphoserine" evidence="1">
    <location>
        <position position="21"/>
    </location>
</feature>
<feature type="modified residue" description="N6-acetyllysine" evidence="1">
    <location>
        <position position="465"/>
    </location>
</feature>
<feature type="modified residue" description="N6-acetyllysine" evidence="1">
    <location>
        <position position="549"/>
    </location>
</feature>
<proteinExistence type="evidence at transcript level"/>
<protein>
    <recommendedName>
        <fullName evidence="2">Eukaryotic translation initiation factor 3 subunit L</fullName>
        <shortName evidence="2">eIF3l</shortName>
    </recommendedName>
    <alternativeName>
        <fullName evidence="2">Eukaryotic translation initiation factor 3 subunit 6-interacting protein</fullName>
    </alternativeName>
    <alternativeName>
        <fullName evidence="2">Eukaryotic translation initiation factor 3 subunit E-interacting protein</fullName>
    </alternativeName>
</protein>
<accession>A5A6M4</accession>
<reference key="1">
    <citation type="journal article" date="2007" name="Gene">
        <title>Mapping of chimpanzee full-length cDNAs onto the human genome unveils large potential divergence of the transcriptome.</title>
        <authorList>
            <person name="Sakate R."/>
            <person name="Suto Y."/>
            <person name="Imanishi T."/>
            <person name="Tanoue T."/>
            <person name="Hida M."/>
            <person name="Hayasaka I."/>
            <person name="Kusuda J."/>
            <person name="Gojobori T."/>
            <person name="Hashimoto K."/>
            <person name="Hirai M."/>
        </authorList>
    </citation>
    <scope>NUCLEOTIDE SEQUENCE [MRNA]</scope>
    <source>
        <tissue>Skin</tissue>
    </source>
</reference>